<name>Y066_HALSA</name>
<protein>
    <recommendedName>
        <fullName>UPF0175 protein VNG_0066H</fullName>
    </recommendedName>
</protein>
<feature type="chain" id="PRO_0000159028" description="UPF0175 protein VNG_0066H">
    <location>
        <begin position="1"/>
        <end position="98"/>
    </location>
</feature>
<sequence length="98" mass="10659">MSGLTADLDAVAAAGGYDDTDAMVEEAVRELLRRRPELRLSLAVEKYQSGAVSLNRAAELAGVSVEAFKDELADRGIDRDAGFLTDAQRDDHLQTFME</sequence>
<dbReference type="EMBL" id="AE004437">
    <property type="protein sequence ID" value="AAG18704.1"/>
    <property type="status" value="ALT_INIT"/>
    <property type="molecule type" value="Genomic_DNA"/>
</dbReference>
<dbReference type="PIR" id="D84167">
    <property type="entry name" value="D84167"/>
</dbReference>
<dbReference type="RefSeq" id="WP_012289086.1">
    <property type="nucleotide sequence ID" value="NC_002607.1"/>
</dbReference>
<dbReference type="SMR" id="Q9HSU8"/>
<dbReference type="STRING" id="64091.VNG_0066H"/>
<dbReference type="PaxDb" id="64091-VNG_0066H"/>
<dbReference type="KEGG" id="hal:VNG_0066H"/>
<dbReference type="PATRIC" id="fig|64091.14.peg.40"/>
<dbReference type="HOGENOM" id="CLU_174581_1_0_2"/>
<dbReference type="InParanoid" id="Q9HSU8"/>
<dbReference type="OrthoDB" id="265582at2157"/>
<dbReference type="Proteomes" id="UP000000554">
    <property type="component" value="Chromosome"/>
</dbReference>
<dbReference type="InterPro" id="IPR005368">
    <property type="entry name" value="UPF0175"/>
</dbReference>
<dbReference type="InterPro" id="IPR052264">
    <property type="entry name" value="UPF0175_domain"/>
</dbReference>
<dbReference type="PANTHER" id="PTHR37525">
    <property type="entry name" value="UPF0175 PROTEIN SSL1255"/>
    <property type="match status" value="1"/>
</dbReference>
<dbReference type="PANTHER" id="PTHR37525:SF1">
    <property type="entry name" value="UPF0175 PROTEIN SSL1255"/>
    <property type="match status" value="1"/>
</dbReference>
<dbReference type="Pfam" id="PF03683">
    <property type="entry name" value="UPF0175"/>
    <property type="match status" value="1"/>
</dbReference>
<keyword id="KW-1185">Reference proteome</keyword>
<reference key="1">
    <citation type="journal article" date="2000" name="Proc. Natl. Acad. Sci. U.S.A.">
        <title>Genome sequence of Halobacterium species NRC-1.</title>
        <authorList>
            <person name="Ng W.V."/>
            <person name="Kennedy S.P."/>
            <person name="Mahairas G.G."/>
            <person name="Berquist B."/>
            <person name="Pan M."/>
            <person name="Shukla H.D."/>
            <person name="Lasky S.R."/>
            <person name="Baliga N.S."/>
            <person name="Thorsson V."/>
            <person name="Sbrogna J."/>
            <person name="Swartzell S."/>
            <person name="Weir D."/>
            <person name="Hall J."/>
            <person name="Dahl T.A."/>
            <person name="Welti R."/>
            <person name="Goo Y.A."/>
            <person name="Leithauser B."/>
            <person name="Keller K."/>
            <person name="Cruz R."/>
            <person name="Danson M.J."/>
            <person name="Hough D.W."/>
            <person name="Maddocks D.G."/>
            <person name="Jablonski P.E."/>
            <person name="Krebs M.P."/>
            <person name="Angevine C.M."/>
            <person name="Dale H."/>
            <person name="Isenbarger T.A."/>
            <person name="Peck R.F."/>
            <person name="Pohlschroder M."/>
            <person name="Spudich J.L."/>
            <person name="Jung K.-H."/>
            <person name="Alam M."/>
            <person name="Freitas T."/>
            <person name="Hou S."/>
            <person name="Daniels C.J."/>
            <person name="Dennis P.P."/>
            <person name="Omer A.D."/>
            <person name="Ebhardt H."/>
            <person name="Lowe T.M."/>
            <person name="Liang P."/>
            <person name="Riley M."/>
            <person name="Hood L."/>
            <person name="DasSarma S."/>
        </authorList>
    </citation>
    <scope>NUCLEOTIDE SEQUENCE [LARGE SCALE GENOMIC DNA]</scope>
    <source>
        <strain>ATCC 700922 / JCM 11081 / NRC-1</strain>
    </source>
</reference>
<gene>
    <name type="ordered locus">VNG_0066H</name>
</gene>
<organism>
    <name type="scientific">Halobacterium salinarum (strain ATCC 700922 / JCM 11081 / NRC-1)</name>
    <name type="common">Halobacterium halobium</name>
    <dbReference type="NCBI Taxonomy" id="64091"/>
    <lineage>
        <taxon>Archaea</taxon>
        <taxon>Methanobacteriati</taxon>
        <taxon>Methanobacteriota</taxon>
        <taxon>Stenosarchaea group</taxon>
        <taxon>Halobacteria</taxon>
        <taxon>Halobacteriales</taxon>
        <taxon>Halobacteriaceae</taxon>
        <taxon>Halobacterium</taxon>
        <taxon>Halobacterium salinarum NRC-34001</taxon>
    </lineage>
</organism>
<comment type="similarity">
    <text evidence="1">Belongs to the UPF0175 family.</text>
</comment>
<comment type="sequence caution" evidence="1">
    <conflict type="erroneous initiation">
        <sequence resource="EMBL-CDS" id="AAG18704"/>
    </conflict>
    <text>Truncated N-terminus.</text>
</comment>
<accession>Q9HSU8</accession>
<evidence type="ECO:0000305" key="1"/>
<proteinExistence type="inferred from homology"/>